<name>CYF_LACSA</name>
<geneLocation type="chloroplast"/>
<evidence type="ECO:0000250" key="1"/>
<evidence type="ECO:0000255" key="2">
    <source>
        <dbReference type="HAMAP-Rule" id="MF_00610"/>
    </source>
</evidence>
<reference key="1">
    <citation type="journal article" date="2006" name="Transgenic Res.">
        <title>Efficient and stable transformation of Lactuca sativa L. cv. Cisco (lettuce) plastids.</title>
        <authorList>
            <person name="Kanamoto H."/>
            <person name="Yamashita A."/>
            <person name="Asao H."/>
            <person name="Okumura S."/>
            <person name="Takase H."/>
            <person name="Hattori M."/>
            <person name="Yokota A."/>
            <person name="Tomizawa K."/>
        </authorList>
    </citation>
    <scope>NUCLEOTIDE SEQUENCE [LARGE SCALE GENOMIC DNA]</scope>
    <source>
        <strain>cv. Cisco</strain>
    </source>
</reference>
<reference key="2">
    <citation type="submission" date="2006-01" db="EMBL/GenBank/DDBJ databases">
        <title>A comparison of the first two published chloroplast genomes in Asteraceae: Lactuca and Helianthus.</title>
        <authorList>
            <person name="Timme R.E."/>
            <person name="Kuehl J.V."/>
            <person name="Boore J.L."/>
            <person name="Jansen R.K."/>
        </authorList>
    </citation>
    <scope>NUCLEOTIDE SEQUENCE [LARGE SCALE GENOMIC DNA]</scope>
    <source>
        <strain>cv. Salinas</strain>
    </source>
</reference>
<feature type="signal peptide" evidence="2">
    <location>
        <begin position="1"/>
        <end position="35"/>
    </location>
</feature>
<feature type="chain" id="PRO_0000275423" description="Cytochrome f">
    <location>
        <begin position="36"/>
        <end position="320"/>
    </location>
</feature>
<feature type="transmembrane region" description="Helical" evidence="2">
    <location>
        <begin position="286"/>
        <end position="306"/>
    </location>
</feature>
<feature type="binding site" description="axial binding residue" evidence="2">
    <location>
        <position position="36"/>
    </location>
    <ligand>
        <name>heme</name>
        <dbReference type="ChEBI" id="CHEBI:30413"/>
    </ligand>
    <ligandPart>
        <name>Fe</name>
        <dbReference type="ChEBI" id="CHEBI:18248"/>
    </ligandPart>
</feature>
<feature type="binding site" description="covalent" evidence="2">
    <location>
        <position position="56"/>
    </location>
    <ligand>
        <name>heme</name>
        <dbReference type="ChEBI" id="CHEBI:30413"/>
    </ligand>
</feature>
<feature type="binding site" description="covalent" evidence="2">
    <location>
        <position position="59"/>
    </location>
    <ligand>
        <name>heme</name>
        <dbReference type="ChEBI" id="CHEBI:30413"/>
    </ligand>
</feature>
<feature type="binding site" description="axial binding residue" evidence="2">
    <location>
        <position position="60"/>
    </location>
    <ligand>
        <name>heme</name>
        <dbReference type="ChEBI" id="CHEBI:30413"/>
    </ligand>
    <ligandPart>
        <name>Fe</name>
        <dbReference type="ChEBI" id="CHEBI:18248"/>
    </ligandPart>
</feature>
<accession>Q332W5</accession>
<sequence length="320" mass="35319">MQTRNNFSWIKEQITRSISVSLMIYIITRASISNAYPIFAQKGYENPREATGRIVCANCHLANKPVDIEVPQTVLPDTVFEAVVRIPYDMQLKQVLANGKKGALNVGAVLILPEGFELAPPDRISPEIKEKMGNLSFQSYRPNQKNILVIGPVPGQKYSEITFPILSPDPATKKDIHFLKYPIYVGGNRGRGQIYPDGSKSNNTVYNATASGIVSKILRKEKGGYEITIADASDGRQVVDIIPPGPELLVSEGESIKFEQPLTSNPNVGGFGQGDAEIVLQDPLRVQGLLFFLASVILAQIFLVLKKKQFEKVQLSEMNF</sequence>
<dbReference type="EMBL" id="AP007232">
    <property type="protein sequence ID" value="BAE47607.1"/>
    <property type="molecule type" value="Genomic_DNA"/>
</dbReference>
<dbReference type="EMBL" id="DQ383816">
    <property type="protein sequence ID" value="ABD47246.1"/>
    <property type="molecule type" value="Genomic_DNA"/>
</dbReference>
<dbReference type="RefSeq" id="YP_398342.1">
    <property type="nucleotide sequence ID" value="NC_007578.1"/>
</dbReference>
<dbReference type="SMR" id="Q332W5"/>
<dbReference type="GeneID" id="3772900"/>
<dbReference type="KEGG" id="lsv:3772900"/>
<dbReference type="OrthoDB" id="993at2759"/>
<dbReference type="GO" id="GO:0009535">
    <property type="term" value="C:chloroplast thylakoid membrane"/>
    <property type="evidence" value="ECO:0007669"/>
    <property type="project" value="UniProtKB-SubCell"/>
</dbReference>
<dbReference type="GO" id="GO:0009055">
    <property type="term" value="F:electron transfer activity"/>
    <property type="evidence" value="ECO:0007669"/>
    <property type="project" value="UniProtKB-UniRule"/>
</dbReference>
<dbReference type="GO" id="GO:0020037">
    <property type="term" value="F:heme binding"/>
    <property type="evidence" value="ECO:0007669"/>
    <property type="project" value="InterPro"/>
</dbReference>
<dbReference type="GO" id="GO:0005506">
    <property type="term" value="F:iron ion binding"/>
    <property type="evidence" value="ECO:0007669"/>
    <property type="project" value="InterPro"/>
</dbReference>
<dbReference type="GO" id="GO:0015979">
    <property type="term" value="P:photosynthesis"/>
    <property type="evidence" value="ECO:0007669"/>
    <property type="project" value="UniProtKB-UniRule"/>
</dbReference>
<dbReference type="FunFam" id="1.20.5.700:FF:000001">
    <property type="entry name" value="Cytochrome f"/>
    <property type="match status" value="1"/>
</dbReference>
<dbReference type="FunFam" id="2.40.50.100:FF:000007">
    <property type="entry name" value="Cytochrome f"/>
    <property type="match status" value="1"/>
</dbReference>
<dbReference type="FunFam" id="2.60.40.830:FF:000001">
    <property type="entry name" value="Cytochrome f"/>
    <property type="match status" value="1"/>
</dbReference>
<dbReference type="Gene3D" id="2.40.50.100">
    <property type="match status" value="1"/>
</dbReference>
<dbReference type="Gene3D" id="2.60.40.830">
    <property type="entry name" value="Cytochrome f large domain"/>
    <property type="match status" value="1"/>
</dbReference>
<dbReference type="Gene3D" id="1.20.5.700">
    <property type="entry name" value="Single helix bin"/>
    <property type="match status" value="1"/>
</dbReference>
<dbReference type="HAMAP" id="MF_00610">
    <property type="entry name" value="Cytb6_f_cytF"/>
    <property type="match status" value="1"/>
</dbReference>
<dbReference type="InterPro" id="IPR024058">
    <property type="entry name" value="Cyt-f_TM"/>
</dbReference>
<dbReference type="InterPro" id="IPR002325">
    <property type="entry name" value="Cyt_f"/>
</dbReference>
<dbReference type="InterPro" id="IPR024094">
    <property type="entry name" value="Cyt_f_lg_dom"/>
</dbReference>
<dbReference type="InterPro" id="IPR036826">
    <property type="entry name" value="Cyt_f_lg_dom_sf"/>
</dbReference>
<dbReference type="InterPro" id="IPR011054">
    <property type="entry name" value="Rudment_hybrid_motif"/>
</dbReference>
<dbReference type="PANTHER" id="PTHR33288">
    <property type="match status" value="1"/>
</dbReference>
<dbReference type="PANTHER" id="PTHR33288:SF10">
    <property type="entry name" value="CYTOCHROME F"/>
    <property type="match status" value="1"/>
</dbReference>
<dbReference type="Pfam" id="PF01333">
    <property type="entry name" value="Apocytochr_F_C"/>
    <property type="match status" value="1"/>
</dbReference>
<dbReference type="Pfam" id="PF16639">
    <property type="entry name" value="Apocytochr_F_N"/>
    <property type="match status" value="1"/>
</dbReference>
<dbReference type="PRINTS" id="PR00610">
    <property type="entry name" value="CYTOCHROMEF"/>
</dbReference>
<dbReference type="SUPFAM" id="SSF103431">
    <property type="entry name" value="Cytochrome f subunit of the cytochrome b6f complex, transmembrane anchor"/>
    <property type="match status" value="1"/>
</dbReference>
<dbReference type="SUPFAM" id="SSF49441">
    <property type="entry name" value="Cytochrome f, large domain"/>
    <property type="match status" value="1"/>
</dbReference>
<dbReference type="SUPFAM" id="SSF51246">
    <property type="entry name" value="Rudiment single hybrid motif"/>
    <property type="match status" value="1"/>
</dbReference>
<dbReference type="PROSITE" id="PS51010">
    <property type="entry name" value="CYTF"/>
    <property type="match status" value="1"/>
</dbReference>
<protein>
    <recommendedName>
        <fullName evidence="2">Cytochrome f</fullName>
    </recommendedName>
</protein>
<comment type="function">
    <text evidence="2">Component of the cytochrome b6-f complex, which mediates electron transfer between photosystem II (PSII) and photosystem I (PSI), cyclic electron flow around PSI, and state transitions.</text>
</comment>
<comment type="cofactor">
    <cofactor evidence="2">
        <name>heme</name>
        <dbReference type="ChEBI" id="CHEBI:30413"/>
    </cofactor>
    <text evidence="2">Binds 1 heme group covalently.</text>
</comment>
<comment type="subunit">
    <text evidence="1">The 4 large subunits of the cytochrome b6-f complex are cytochrome b6, subunit IV (17 kDa polypeptide, petD), cytochrome f and the Rieske protein, while the 4 small subunits are PetG, PetL, PetM and PetN. The complex functions as a dimer (By similarity).</text>
</comment>
<comment type="subcellular location">
    <subcellularLocation>
        <location evidence="2">Plastid</location>
        <location evidence="2">Chloroplast thylakoid membrane</location>
        <topology evidence="2">Single-pass membrane protein</topology>
    </subcellularLocation>
</comment>
<comment type="similarity">
    <text evidence="2">Belongs to the cytochrome f family.</text>
</comment>
<gene>
    <name evidence="2" type="primary">petA</name>
</gene>
<organism>
    <name type="scientific">Lactuca sativa</name>
    <name type="common">Garden lettuce</name>
    <dbReference type="NCBI Taxonomy" id="4236"/>
    <lineage>
        <taxon>Eukaryota</taxon>
        <taxon>Viridiplantae</taxon>
        <taxon>Streptophyta</taxon>
        <taxon>Embryophyta</taxon>
        <taxon>Tracheophyta</taxon>
        <taxon>Spermatophyta</taxon>
        <taxon>Magnoliopsida</taxon>
        <taxon>eudicotyledons</taxon>
        <taxon>Gunneridae</taxon>
        <taxon>Pentapetalae</taxon>
        <taxon>asterids</taxon>
        <taxon>campanulids</taxon>
        <taxon>Asterales</taxon>
        <taxon>Asteraceae</taxon>
        <taxon>Cichorioideae</taxon>
        <taxon>Cichorieae</taxon>
        <taxon>Lactucinae</taxon>
        <taxon>Lactuca</taxon>
    </lineage>
</organism>
<keyword id="KW-0150">Chloroplast</keyword>
<keyword id="KW-0249">Electron transport</keyword>
<keyword id="KW-0349">Heme</keyword>
<keyword id="KW-0408">Iron</keyword>
<keyword id="KW-0472">Membrane</keyword>
<keyword id="KW-0479">Metal-binding</keyword>
<keyword id="KW-0602">Photosynthesis</keyword>
<keyword id="KW-0934">Plastid</keyword>
<keyword id="KW-0732">Signal</keyword>
<keyword id="KW-0793">Thylakoid</keyword>
<keyword id="KW-0812">Transmembrane</keyword>
<keyword id="KW-1133">Transmembrane helix</keyword>
<keyword id="KW-0813">Transport</keyword>
<proteinExistence type="inferred from homology"/>